<name>MIAA_RICM5</name>
<organism>
    <name type="scientific">Rickettsia massiliae (strain Mtu5)</name>
    <dbReference type="NCBI Taxonomy" id="416276"/>
    <lineage>
        <taxon>Bacteria</taxon>
        <taxon>Pseudomonadati</taxon>
        <taxon>Pseudomonadota</taxon>
        <taxon>Alphaproteobacteria</taxon>
        <taxon>Rickettsiales</taxon>
        <taxon>Rickettsiaceae</taxon>
        <taxon>Rickettsieae</taxon>
        <taxon>Rickettsia</taxon>
        <taxon>spotted fever group</taxon>
    </lineage>
</organism>
<proteinExistence type="inferred from homology"/>
<feature type="chain" id="PRO_0000377295" description="tRNA dimethylallyltransferase">
    <location>
        <begin position="1"/>
        <end position="363"/>
    </location>
</feature>
<feature type="region of interest" description="Interaction with substrate tRNA" evidence="1">
    <location>
        <begin position="90"/>
        <end position="93"/>
    </location>
</feature>
<feature type="region of interest" description="Interaction with substrate tRNA" evidence="1">
    <location>
        <begin position="214"/>
        <end position="218"/>
    </location>
</feature>
<feature type="binding site" evidence="1">
    <location>
        <begin position="65"/>
        <end position="72"/>
    </location>
    <ligand>
        <name>ATP</name>
        <dbReference type="ChEBI" id="CHEBI:30616"/>
    </ligand>
</feature>
<feature type="binding site" evidence="1">
    <location>
        <begin position="67"/>
        <end position="72"/>
    </location>
    <ligand>
        <name>substrate</name>
    </ligand>
</feature>
<feature type="site" description="Interaction with substrate tRNA" evidence="1">
    <location>
        <position position="156"/>
    </location>
</feature>
<feature type="site" description="Interaction with substrate tRNA" evidence="1">
    <location>
        <position position="178"/>
    </location>
</feature>
<evidence type="ECO:0000255" key="1">
    <source>
        <dbReference type="HAMAP-Rule" id="MF_00185"/>
    </source>
</evidence>
<accession>A8F1N7</accession>
<comment type="function">
    <text evidence="1">Catalyzes the transfer of a dimethylallyl group onto the adenine at position 37 in tRNAs that read codons beginning with uridine, leading to the formation of N6-(dimethylallyl)adenosine (i(6)A).</text>
</comment>
<comment type="catalytic activity">
    <reaction evidence="1">
        <text>adenosine(37) in tRNA + dimethylallyl diphosphate = N(6)-dimethylallyladenosine(37) in tRNA + diphosphate</text>
        <dbReference type="Rhea" id="RHEA:26482"/>
        <dbReference type="Rhea" id="RHEA-COMP:10162"/>
        <dbReference type="Rhea" id="RHEA-COMP:10375"/>
        <dbReference type="ChEBI" id="CHEBI:33019"/>
        <dbReference type="ChEBI" id="CHEBI:57623"/>
        <dbReference type="ChEBI" id="CHEBI:74411"/>
        <dbReference type="ChEBI" id="CHEBI:74415"/>
        <dbReference type="EC" id="2.5.1.75"/>
    </reaction>
</comment>
<comment type="cofactor">
    <cofactor evidence="1">
        <name>Mg(2+)</name>
        <dbReference type="ChEBI" id="CHEBI:18420"/>
    </cofactor>
</comment>
<comment type="subunit">
    <text evidence="1">Monomer.</text>
</comment>
<comment type="similarity">
    <text evidence="1">Belongs to the IPP transferase family.</text>
</comment>
<reference key="1">
    <citation type="journal article" date="2007" name="Genome Res.">
        <title>Lateral gene transfer between obligate intracellular bacteria: evidence from the Rickettsia massiliae genome.</title>
        <authorList>
            <person name="Blanc G."/>
            <person name="Ogata H."/>
            <person name="Robert C."/>
            <person name="Audic S."/>
            <person name="Claverie J.-M."/>
            <person name="Raoult D."/>
        </authorList>
    </citation>
    <scope>NUCLEOTIDE SEQUENCE [LARGE SCALE GENOMIC DNA]</scope>
    <source>
        <strain>Mtu5</strain>
    </source>
</reference>
<dbReference type="EC" id="2.5.1.75" evidence="1"/>
<dbReference type="EMBL" id="CP000683">
    <property type="protein sequence ID" value="ABV84823.1"/>
    <property type="molecule type" value="Genomic_DNA"/>
</dbReference>
<dbReference type="RefSeq" id="WP_012152798.1">
    <property type="nucleotide sequence ID" value="NC_009900.1"/>
</dbReference>
<dbReference type="SMR" id="A8F1N7"/>
<dbReference type="KEGG" id="rms:RMA_0663"/>
<dbReference type="HOGENOM" id="CLU_032616_0_1_5"/>
<dbReference type="Proteomes" id="UP000001311">
    <property type="component" value="Chromosome"/>
</dbReference>
<dbReference type="GO" id="GO:0005524">
    <property type="term" value="F:ATP binding"/>
    <property type="evidence" value="ECO:0007669"/>
    <property type="project" value="UniProtKB-UniRule"/>
</dbReference>
<dbReference type="GO" id="GO:0052381">
    <property type="term" value="F:tRNA dimethylallyltransferase activity"/>
    <property type="evidence" value="ECO:0007669"/>
    <property type="project" value="UniProtKB-UniRule"/>
</dbReference>
<dbReference type="GO" id="GO:0006400">
    <property type="term" value="P:tRNA modification"/>
    <property type="evidence" value="ECO:0007669"/>
    <property type="project" value="TreeGrafter"/>
</dbReference>
<dbReference type="Gene3D" id="1.10.20.140">
    <property type="match status" value="1"/>
</dbReference>
<dbReference type="Gene3D" id="3.40.50.300">
    <property type="entry name" value="P-loop containing nucleotide triphosphate hydrolases"/>
    <property type="match status" value="1"/>
</dbReference>
<dbReference type="HAMAP" id="MF_00185">
    <property type="entry name" value="IPP_trans"/>
    <property type="match status" value="1"/>
</dbReference>
<dbReference type="InterPro" id="IPR039657">
    <property type="entry name" value="Dimethylallyltransferase"/>
</dbReference>
<dbReference type="InterPro" id="IPR018022">
    <property type="entry name" value="IPT"/>
</dbReference>
<dbReference type="InterPro" id="IPR027417">
    <property type="entry name" value="P-loop_NTPase"/>
</dbReference>
<dbReference type="NCBIfam" id="TIGR00174">
    <property type="entry name" value="miaA"/>
    <property type="match status" value="1"/>
</dbReference>
<dbReference type="PANTHER" id="PTHR11088">
    <property type="entry name" value="TRNA DIMETHYLALLYLTRANSFERASE"/>
    <property type="match status" value="1"/>
</dbReference>
<dbReference type="PANTHER" id="PTHR11088:SF60">
    <property type="entry name" value="TRNA DIMETHYLALLYLTRANSFERASE"/>
    <property type="match status" value="1"/>
</dbReference>
<dbReference type="Pfam" id="PF01715">
    <property type="entry name" value="IPPT"/>
    <property type="match status" value="1"/>
</dbReference>
<dbReference type="SUPFAM" id="SSF52540">
    <property type="entry name" value="P-loop containing nucleoside triphosphate hydrolases"/>
    <property type="match status" value="2"/>
</dbReference>
<sequence>MLARNDDTSSYLLVKPVTKKEIYSNDLENGNVKRGASTHSLYLIGDPKFCRNNSSKQKSIIILCGPTASGKSYLGHELAKAYNGEIINIDSMQVYKEIPIITASPPKSYKTEILYHLYNFLSMTEDFSVIKYLKLATEKIKEITDRGKLPILIGGTGLYINSLVFGYNNIPDISEDLREQVRNLHAKIGNIELWGKLEKLDPLAASKINQNDTQRLIRAYEVFMQTNKSIFSFQTLPKEQILPDFNFKIIFLNPERKFLYKTCDERLDKIFKEGAIDEIALIKKQFAPKDYTNWKAVGIKEILAYLNGNLTLDEALNAAQIRTRQYAKRQVTWFKNQIQDKITLEYTNQEEFTQTLKKPFKTI</sequence>
<protein>
    <recommendedName>
        <fullName evidence="1">tRNA dimethylallyltransferase</fullName>
        <ecNumber evidence="1">2.5.1.75</ecNumber>
    </recommendedName>
    <alternativeName>
        <fullName evidence="1">Dimethylallyl diphosphate:tRNA dimethylallyltransferase</fullName>
        <shortName evidence="1">DMAPP:tRNA dimethylallyltransferase</shortName>
        <shortName evidence="1">DMATase</shortName>
    </alternativeName>
    <alternativeName>
        <fullName evidence="1">Isopentenyl-diphosphate:tRNA isopentenyltransferase</fullName>
        <shortName evidence="1">IPP transferase</shortName>
        <shortName evidence="1">IPPT</shortName>
        <shortName evidence="1">IPTase</shortName>
    </alternativeName>
</protein>
<gene>
    <name evidence="1" type="primary">miaA</name>
    <name type="ordered locus">RMA_0663</name>
</gene>
<keyword id="KW-0067">ATP-binding</keyword>
<keyword id="KW-0460">Magnesium</keyword>
<keyword id="KW-0547">Nucleotide-binding</keyword>
<keyword id="KW-0808">Transferase</keyword>
<keyword id="KW-0819">tRNA processing</keyword>